<feature type="signal peptide" evidence="1">
    <location>
        <begin position="1"/>
        <end position="44"/>
    </location>
</feature>
<feature type="chain" id="PRO_0000248950" description="Clumping factor B">
    <location>
        <begin position="45"/>
        <end position="841"/>
    </location>
</feature>
<feature type="propeptide" id="PRO_0000248951" description="Removed by sortase" evidence="2 9">
    <location>
        <begin position="842"/>
        <end position="877"/>
    </location>
</feature>
<feature type="region of interest" description="Disordered" evidence="3">
    <location>
        <begin position="44"/>
        <end position="192"/>
    </location>
</feature>
<feature type="region of interest" description="Ligand binding A region">
    <location>
        <begin position="45"/>
        <end position="542"/>
    </location>
</feature>
<feature type="region of interest" description="Disordered" evidence="3">
    <location>
        <begin position="530"/>
        <end position="849"/>
    </location>
</feature>
<feature type="short sequence motif" description="YSIRK-G/S signaling motif" evidence="10">
    <location>
        <begin position="15"/>
        <end position="26"/>
    </location>
</feature>
<feature type="short sequence motif" description="MIDAS-like motif">
    <location>
        <begin position="272"/>
        <end position="276"/>
    </location>
</feature>
<feature type="short sequence motif" description="LPXTG sorting signal" evidence="2">
    <location>
        <begin position="838"/>
        <end position="842"/>
    </location>
</feature>
<feature type="compositionally biased region" description="Polar residues" evidence="3">
    <location>
        <begin position="44"/>
        <end position="61"/>
    </location>
</feature>
<feature type="compositionally biased region" description="Polar residues" evidence="3">
    <location>
        <begin position="68"/>
        <end position="95"/>
    </location>
</feature>
<feature type="compositionally biased region" description="Low complexity" evidence="3">
    <location>
        <begin position="96"/>
        <end position="119"/>
    </location>
</feature>
<feature type="compositionally biased region" description="Polar residues" evidence="3">
    <location>
        <begin position="120"/>
        <end position="189"/>
    </location>
</feature>
<feature type="compositionally biased region" description="Pro residues" evidence="3">
    <location>
        <begin position="545"/>
        <end position="555"/>
    </location>
</feature>
<feature type="compositionally biased region" description="Acidic residues" evidence="3">
    <location>
        <begin position="556"/>
        <end position="801"/>
    </location>
</feature>
<feature type="compositionally biased region" description="Polar residues" evidence="3">
    <location>
        <begin position="805"/>
        <end position="816"/>
    </location>
</feature>
<feature type="compositionally biased region" description="Basic and acidic residues" evidence="3">
    <location>
        <begin position="833"/>
        <end position="846"/>
    </location>
</feature>
<feature type="site" description="Cleavage; by aureolysin">
    <location>
        <begin position="197"/>
        <end position="198"/>
    </location>
</feature>
<feature type="site" description="Cleavage; by aureolysin">
    <location>
        <begin position="199"/>
        <end position="200"/>
    </location>
</feature>
<feature type="modified residue" description="Pentaglycyl murein peptidoglycan amidated threonine" evidence="2">
    <location>
        <position position="841"/>
    </location>
</feature>
<dbReference type="EMBL" id="CP000253">
    <property type="protein sequence ID" value="ABD31953.1"/>
    <property type="molecule type" value="Genomic_DNA"/>
</dbReference>
<dbReference type="RefSeq" id="WP_000745896.1">
    <property type="nucleotide sequence ID" value="NC_007795.1"/>
</dbReference>
<dbReference type="RefSeq" id="YP_501414.1">
    <property type="nucleotide sequence ID" value="NC_007795.1"/>
</dbReference>
<dbReference type="SMR" id="Q2FUY2"/>
<dbReference type="STRING" id="93061.SAOUHSC_02963"/>
<dbReference type="GeneID" id="3921665"/>
<dbReference type="KEGG" id="sao:SAOUHSC_02963"/>
<dbReference type="PATRIC" id="fig|93061.5.peg.2673"/>
<dbReference type="eggNOG" id="COG2931">
    <property type="taxonomic scope" value="Bacteria"/>
</dbReference>
<dbReference type="eggNOG" id="COG4932">
    <property type="taxonomic scope" value="Bacteria"/>
</dbReference>
<dbReference type="HOGENOM" id="CLU_004137_2_0_9"/>
<dbReference type="OrthoDB" id="2278104at2"/>
<dbReference type="PRO" id="PR:Q2FUY2"/>
<dbReference type="Proteomes" id="UP000008816">
    <property type="component" value="Chromosome"/>
</dbReference>
<dbReference type="GO" id="GO:0005576">
    <property type="term" value="C:extracellular region"/>
    <property type="evidence" value="ECO:0007669"/>
    <property type="project" value="UniProtKB-KW"/>
</dbReference>
<dbReference type="GO" id="GO:0007155">
    <property type="term" value="P:cell adhesion"/>
    <property type="evidence" value="ECO:0007669"/>
    <property type="project" value="InterPro"/>
</dbReference>
<dbReference type="Gene3D" id="2.60.40.1280">
    <property type="match status" value="1"/>
</dbReference>
<dbReference type="Gene3D" id="2.60.40.1290">
    <property type="match status" value="1"/>
</dbReference>
<dbReference type="InterPro" id="IPR011266">
    <property type="entry name" value="Adhesin_Fg-bd_dom_2"/>
</dbReference>
<dbReference type="InterPro" id="IPR008966">
    <property type="entry name" value="Adhesion_dom_sf"/>
</dbReference>
<dbReference type="InterPro" id="IPR011252">
    <property type="entry name" value="Fibrogen-bd_dom1"/>
</dbReference>
<dbReference type="InterPro" id="IPR019931">
    <property type="entry name" value="LPXTG_anchor"/>
</dbReference>
<dbReference type="InterPro" id="IPR050972">
    <property type="entry name" value="SDr-like"/>
</dbReference>
<dbReference type="InterPro" id="IPR041171">
    <property type="entry name" value="SDR_Ig"/>
</dbReference>
<dbReference type="InterPro" id="IPR005877">
    <property type="entry name" value="YSIRK_signal_dom"/>
</dbReference>
<dbReference type="NCBIfam" id="TIGR01167">
    <property type="entry name" value="LPXTG_anchor"/>
    <property type="match status" value="1"/>
</dbReference>
<dbReference type="NCBIfam" id="NF033845">
    <property type="entry name" value="MSCRAMM_ClfB"/>
    <property type="match status" value="1"/>
</dbReference>
<dbReference type="NCBIfam" id="TIGR01168">
    <property type="entry name" value="YSIRK_signal"/>
    <property type="match status" value="1"/>
</dbReference>
<dbReference type="PANTHER" id="PTHR34403">
    <property type="entry name" value="TOL-PAL SYSTEM PROTEIN TOLA"/>
    <property type="match status" value="1"/>
</dbReference>
<dbReference type="PANTHER" id="PTHR34403:SF8">
    <property type="entry name" value="TOL-PAL SYSTEM PROTEIN TOLA"/>
    <property type="match status" value="1"/>
</dbReference>
<dbReference type="Pfam" id="PF17961">
    <property type="entry name" value="Big_8"/>
    <property type="match status" value="1"/>
</dbReference>
<dbReference type="Pfam" id="PF00746">
    <property type="entry name" value="Gram_pos_anchor"/>
    <property type="match status" value="1"/>
</dbReference>
<dbReference type="Pfam" id="PF10425">
    <property type="entry name" value="SdrG_C_C"/>
    <property type="match status" value="1"/>
</dbReference>
<dbReference type="Pfam" id="PF04650">
    <property type="entry name" value="YSIRK_signal"/>
    <property type="match status" value="1"/>
</dbReference>
<dbReference type="SUPFAM" id="SSF49401">
    <property type="entry name" value="Bacterial adhesins"/>
    <property type="match status" value="2"/>
</dbReference>
<dbReference type="PROSITE" id="PS50847">
    <property type="entry name" value="GRAM_POS_ANCHORING"/>
    <property type="match status" value="1"/>
</dbReference>
<protein>
    <recommendedName>
        <fullName>Clumping factor B</fullName>
    </recommendedName>
    <alternativeName>
        <fullName>Fibrinogen receptor B</fullName>
    </alternativeName>
    <alternativeName>
        <fullName>Fibrinogen-binding protein B</fullName>
    </alternativeName>
</protein>
<reference key="1">
    <citation type="book" date="2006" name="Gram positive pathogens, 2nd edition">
        <title>The Staphylococcus aureus NCTC 8325 genome.</title>
        <editorList>
            <person name="Fischetti V."/>
            <person name="Novick R."/>
            <person name="Ferretti J."/>
            <person name="Portnoy D."/>
            <person name="Rood J."/>
        </editorList>
        <authorList>
            <person name="Gillaspy A.F."/>
            <person name="Worrell V."/>
            <person name="Orvis J."/>
            <person name="Roe B.A."/>
            <person name="Dyer D.W."/>
            <person name="Iandolo J.J."/>
        </authorList>
    </citation>
    <scope>NUCLEOTIDE SEQUENCE [LARGE SCALE GENOMIC DNA]</scope>
    <source>
        <strain>NCTC 8325 / PS 47</strain>
    </source>
</reference>
<reference key="2">
    <citation type="journal article" date="2001" name="J. Biol. Chem.">
        <title>Loss of clumping factor B fibrinogen binding activity by Staphylococcus aureus involves cessation of transcription, shedding and cleavage by metalloprotease.</title>
        <authorList>
            <person name="McAleese F.M."/>
            <person name="Walsh E.J."/>
            <person name="Sieprawska M."/>
            <person name="Potempa J."/>
            <person name="Foster T.J."/>
        </authorList>
    </citation>
    <scope>CLEAVAGE BY AUREOLYSIN</scope>
</reference>
<reference key="3">
    <citation type="journal article" date="2002" name="Cell. Microbiol.">
        <title>Staphylococcus aureus clumping factor B (ClfB) promotes adherence to human type I cytokeratin 10: implications for nasal colonization.</title>
        <authorList>
            <person name="O'Brien L.M."/>
            <person name="Walsh E.J."/>
            <person name="Massey R.C."/>
            <person name="Peacock S.J."/>
            <person name="Foster T.J."/>
        </authorList>
    </citation>
    <scope>FUNCTION</scope>
</reference>
<reference key="4">
    <citation type="journal article" date="2004" name="J. Biol. Chem.">
        <title>Clumping factor B, a fibrinogen-binding MSCRAMM (microbial surface components recognizing adhesive matrix molecules) adhesin of Staphylococcus aureus, also binds to the tail region of type I cytokeratin 10.</title>
        <authorList>
            <person name="Walsh E.J."/>
            <person name="O'Brien L.M."/>
            <person name="Liang X."/>
            <person name="Hoeoek M."/>
            <person name="Foster T.J."/>
        </authorList>
    </citation>
    <scope>FUNCTION</scope>
</reference>
<reference key="5">
    <citation type="journal article" date="2002" name="Proc. Natl. Acad. Sci. U.S.A.">
        <title>An iron-regulated sortase anchors a class of surface protein during Staphylococcus aureus pathogenesis.</title>
        <authorList>
            <person name="Mazmanian S.K."/>
            <person name="Ton-That H."/>
            <person name="Su K."/>
            <person name="Schneewind O."/>
        </authorList>
    </citation>
    <scope>SUBCELLULAR LOCATION</scope>
    <scope>PROCESSING BY SORTASE A</scope>
    <source>
        <strain>RN4220</strain>
    </source>
</reference>
<reference key="6">
    <citation type="journal article" date="2008" name="EMBO J.">
        <title>Signal peptides direct surface proteins to two distinct envelope locations of Staphylococcus aureus.</title>
        <authorList>
            <person name="DeDent A."/>
            <person name="Bae T."/>
            <person name="Missiakas D.M."/>
            <person name="Schneewind O."/>
        </authorList>
    </citation>
    <scope>SUBCELLULAR LOCATION</scope>
    <source>
        <strain>RN4220</strain>
    </source>
</reference>
<evidence type="ECO:0000255" key="1"/>
<evidence type="ECO:0000255" key="2">
    <source>
        <dbReference type="PROSITE-ProRule" id="PRU00477"/>
    </source>
</evidence>
<evidence type="ECO:0000256" key="3">
    <source>
        <dbReference type="SAM" id="MobiDB-lite"/>
    </source>
</evidence>
<evidence type="ECO:0000269" key="4">
    <source>
    </source>
</evidence>
<evidence type="ECO:0000269" key="5">
    <source>
    </source>
</evidence>
<evidence type="ECO:0000269" key="6">
    <source>
    </source>
</evidence>
<evidence type="ECO:0000269" key="7">
    <source>
    </source>
</evidence>
<evidence type="ECO:0000305" key="8"/>
<evidence type="ECO:0000305" key="9">
    <source>
    </source>
</evidence>
<evidence type="ECO:0000305" key="10">
    <source>
    </source>
</evidence>
<proteinExistence type="evidence at protein level"/>
<name>CLFB_STAA8</name>
<accession>Q2FUY2</accession>
<gene>
    <name type="primary">clfB</name>
    <name type="ordered locus">SAOUHSC_02963</name>
</gene>
<comment type="function">
    <text evidence="5 6">Cell surface-associated protein implicated in virulence by promoting bacterial attachment to both alpha- and beta-chains of human fibrinogen and inducing the formation of bacterial clumps. Partly responsible for mediating bacterial attachment to the highly keratinized squamous epithelial cells from the nasal cavity via an interaction with cytokeratin K10 (K10). Also promotes bacterial attachment to cultured keratinocytes, possibly through an interaction with cytokeratin K10. Binds mouse cytokeratin K10. Activates human platelet aggregation.</text>
</comment>
<comment type="subcellular location">
    <subcellularLocation>
        <location evidence="2 7 9">Secreted</location>
        <location evidence="2 7 9">Cell wall</location>
        <topology evidence="2 9">Peptidoglycan-anchor</topology>
    </subcellularLocation>
    <text evidence="7 9">Found in a ring-like distribution on the cell surface (PubMed:18800056). Colocalizes with SdrD (PubMed:18800056). Anchored to the cell wall by sortase A (Probable).</text>
</comment>
<comment type="domain">
    <text>The Asp/Ser-rich domain functions as a stalk to allow the ligand binding domain to be displayed in a functional form on the cell surface.</text>
</comment>
<comment type="PTM">
    <text evidence="4">Proteolytically cleaved by aureolysin (aur). This cleavage leads to the inactivation of ClfB.</text>
</comment>
<comment type="similarity">
    <text evidence="8">Belongs to the serine-aspartate repeat-containing protein (SDr) family.</text>
</comment>
<sequence>MKKRIDYLSNKQNKYSIRRFTVGTTSVIVGATILFGIGNHQAQASEQSNDTTQSSKNNASADSEKNNMIETPQLNTTANDTSDISANTNSANVDSTTKPMSTQTSNTTTTEPASTNETPQPTAIKNQATAAKMQDQTVPQEANSQVDNKTTNDANSIATNSELKNSQTLDLPQSSPQTISNAQGTSKPSVRTRAVRSLAVAEPVVNAADAKGTNVNDKVTASNFKLEKTTFDPNQSGNTFMAANFTVTDKVKSGDYFTAKLPDSLTGNGDVDYSNSNNTMPIADIKSTNGDVVAKATYDILTKTYTFVFTDYVNNKENINGQFSLPLFTDRAKAPKSGTYDANINIADEMFNNKITYNYSSPIAGIDKPNGANISSQIIGVDTASGQNTYKQTVFVNPKQRVLGNTWVYIKGYQDKIEESSGKVSATDTKLRIFEVNDTSKLSDSYYADPNDSNLKEVTDQFKNRIYYEHPNVASIKFGDITKTYVVLVEGHYDNTGKNLKTQVIQENVDPVTNRDYSIFGWNNENVVRYGGGSADGDSAVNPKDPTPGPPVDPEPSPDPEPEPTPDPEPSPDPEPEPSPDPDPDSDSDSDSGSDSDSGSDSDSESDSDSDSDSDSDSDSDSESDSDSESDSESDSDSDSDSDSDSDSDSDSDSDSDSDSDSDSDSDSDSDSDSDSDSDSDSDSDSDSDSDSDSDSDSDSDSDSDSDSDSDSDSDSDSDSDSDSDSDSDSDSDSDSDSDSDSDSDSDSDSDSDSDSDSDSDSDSDSDSDSDSDSDSDSDSDSDSDSDSDSDSDSDSDSDSDSDSRVTPPNNEQKAPSNPKGEVNHSNKVSKQHKTDALPETGDKSENTNATLFGAMMALLGSLLLFRKRKQDHKEKA</sequence>
<keyword id="KW-0134">Cell wall</keyword>
<keyword id="KW-0572">Peptidoglycan-anchor</keyword>
<keyword id="KW-1185">Reference proteome</keyword>
<keyword id="KW-0964">Secreted</keyword>
<keyword id="KW-0732">Signal</keyword>
<keyword id="KW-0843">Virulence</keyword>
<organism>
    <name type="scientific">Staphylococcus aureus (strain NCTC 8325 / PS 47)</name>
    <dbReference type="NCBI Taxonomy" id="93061"/>
    <lineage>
        <taxon>Bacteria</taxon>
        <taxon>Bacillati</taxon>
        <taxon>Bacillota</taxon>
        <taxon>Bacilli</taxon>
        <taxon>Bacillales</taxon>
        <taxon>Staphylococcaceae</taxon>
        <taxon>Staphylococcus</taxon>
    </lineage>
</organism>